<organism>
    <name type="scientific">Wolbachia pipientis wMel</name>
    <dbReference type="NCBI Taxonomy" id="163164"/>
    <lineage>
        <taxon>Bacteria</taxon>
        <taxon>Pseudomonadati</taxon>
        <taxon>Pseudomonadota</taxon>
        <taxon>Alphaproteobacteria</taxon>
        <taxon>Rickettsiales</taxon>
        <taxon>Anaplasmataceae</taxon>
        <taxon>Wolbachieae</taxon>
        <taxon>Wolbachia</taxon>
    </lineage>
</organism>
<dbReference type="EC" id="3.5.1.88" evidence="1"/>
<dbReference type="EMBL" id="AE017196">
    <property type="protein sequence ID" value="AAS13916.1"/>
    <property type="molecule type" value="Genomic_DNA"/>
</dbReference>
<dbReference type="RefSeq" id="WP_010962405.1">
    <property type="nucleotide sequence ID" value="NZ_OX384529.1"/>
</dbReference>
<dbReference type="SMR" id="Q73IJ6"/>
<dbReference type="EnsemblBacteria" id="AAS13916">
    <property type="protein sequence ID" value="AAS13916"/>
    <property type="gene ID" value="WD_0165"/>
</dbReference>
<dbReference type="GeneID" id="70035656"/>
<dbReference type="KEGG" id="wol:WD_0165"/>
<dbReference type="eggNOG" id="COG0242">
    <property type="taxonomic scope" value="Bacteria"/>
</dbReference>
<dbReference type="Proteomes" id="UP000008215">
    <property type="component" value="Chromosome"/>
</dbReference>
<dbReference type="GO" id="GO:0046872">
    <property type="term" value="F:metal ion binding"/>
    <property type="evidence" value="ECO:0007669"/>
    <property type="project" value="UniProtKB-KW"/>
</dbReference>
<dbReference type="GO" id="GO:0042586">
    <property type="term" value="F:peptide deformylase activity"/>
    <property type="evidence" value="ECO:0007669"/>
    <property type="project" value="UniProtKB-UniRule"/>
</dbReference>
<dbReference type="GO" id="GO:0006412">
    <property type="term" value="P:translation"/>
    <property type="evidence" value="ECO:0007669"/>
    <property type="project" value="UniProtKB-UniRule"/>
</dbReference>
<dbReference type="CDD" id="cd00487">
    <property type="entry name" value="Pep_deformylase"/>
    <property type="match status" value="1"/>
</dbReference>
<dbReference type="Gene3D" id="3.90.45.10">
    <property type="entry name" value="Peptide deformylase"/>
    <property type="match status" value="1"/>
</dbReference>
<dbReference type="HAMAP" id="MF_00163">
    <property type="entry name" value="Pep_deformylase"/>
    <property type="match status" value="1"/>
</dbReference>
<dbReference type="InterPro" id="IPR023635">
    <property type="entry name" value="Peptide_deformylase"/>
</dbReference>
<dbReference type="InterPro" id="IPR036821">
    <property type="entry name" value="Peptide_deformylase_sf"/>
</dbReference>
<dbReference type="NCBIfam" id="TIGR00079">
    <property type="entry name" value="pept_deformyl"/>
    <property type="match status" value="1"/>
</dbReference>
<dbReference type="NCBIfam" id="NF001159">
    <property type="entry name" value="PRK00150.1-3"/>
    <property type="match status" value="1"/>
</dbReference>
<dbReference type="PANTHER" id="PTHR10458">
    <property type="entry name" value="PEPTIDE DEFORMYLASE"/>
    <property type="match status" value="1"/>
</dbReference>
<dbReference type="PANTHER" id="PTHR10458:SF22">
    <property type="entry name" value="PEPTIDE DEFORMYLASE"/>
    <property type="match status" value="1"/>
</dbReference>
<dbReference type="Pfam" id="PF01327">
    <property type="entry name" value="Pep_deformylase"/>
    <property type="match status" value="1"/>
</dbReference>
<dbReference type="PIRSF" id="PIRSF004749">
    <property type="entry name" value="Pep_def"/>
    <property type="match status" value="1"/>
</dbReference>
<dbReference type="PRINTS" id="PR01576">
    <property type="entry name" value="PDEFORMYLASE"/>
</dbReference>
<dbReference type="SUPFAM" id="SSF56420">
    <property type="entry name" value="Peptide deformylase"/>
    <property type="match status" value="1"/>
</dbReference>
<accession>Q73IJ6</accession>
<comment type="function">
    <text evidence="1">Removes the formyl group from the N-terminal Met of newly synthesized proteins. Requires at least a dipeptide for an efficient rate of reaction. N-terminal L-methionine is a prerequisite for activity but the enzyme has broad specificity at other positions.</text>
</comment>
<comment type="catalytic activity">
    <reaction evidence="1">
        <text>N-terminal N-formyl-L-methionyl-[peptide] + H2O = N-terminal L-methionyl-[peptide] + formate</text>
        <dbReference type="Rhea" id="RHEA:24420"/>
        <dbReference type="Rhea" id="RHEA-COMP:10639"/>
        <dbReference type="Rhea" id="RHEA-COMP:10640"/>
        <dbReference type="ChEBI" id="CHEBI:15377"/>
        <dbReference type="ChEBI" id="CHEBI:15740"/>
        <dbReference type="ChEBI" id="CHEBI:49298"/>
        <dbReference type="ChEBI" id="CHEBI:64731"/>
        <dbReference type="EC" id="3.5.1.88"/>
    </reaction>
</comment>
<comment type="cofactor">
    <cofactor evidence="1">
        <name>Fe(2+)</name>
        <dbReference type="ChEBI" id="CHEBI:29033"/>
    </cofactor>
    <text evidence="1">Binds 1 Fe(2+) ion.</text>
</comment>
<comment type="similarity">
    <text evidence="1">Belongs to the polypeptide deformylase family.</text>
</comment>
<proteinExistence type="inferred from homology"/>
<evidence type="ECO:0000255" key="1">
    <source>
        <dbReference type="HAMAP-Rule" id="MF_00163"/>
    </source>
</evidence>
<reference key="1">
    <citation type="journal article" date="2004" name="PLoS Biol.">
        <title>Phylogenomics of the reproductive parasite Wolbachia pipientis wMel: a streamlined genome overrun by mobile genetic elements.</title>
        <authorList>
            <person name="Wu M."/>
            <person name="Sun L.V."/>
            <person name="Vamathevan J.J."/>
            <person name="Riegler M."/>
            <person name="DeBoy R.T."/>
            <person name="Brownlie J.C."/>
            <person name="McGraw E.A."/>
            <person name="Martin W."/>
            <person name="Esser C."/>
            <person name="Ahmadinejad N."/>
            <person name="Wiegand C."/>
            <person name="Madupu R."/>
            <person name="Beanan M.J."/>
            <person name="Brinkac L.M."/>
            <person name="Daugherty S.C."/>
            <person name="Durkin A.S."/>
            <person name="Kolonay J.F."/>
            <person name="Nelson W.C."/>
            <person name="Mohamoud Y."/>
            <person name="Lee P."/>
            <person name="Berry K.J."/>
            <person name="Young M.B."/>
            <person name="Utterback T.R."/>
            <person name="Weidman J.F."/>
            <person name="Nierman W.C."/>
            <person name="Paulsen I.T."/>
            <person name="Nelson K.E."/>
            <person name="Tettelin H."/>
            <person name="O'Neill S.L."/>
            <person name="Eisen J.A."/>
        </authorList>
    </citation>
    <scope>NUCLEOTIDE SEQUENCE [LARGE SCALE GENOMIC DNA]</scope>
</reference>
<name>DEF_WOLPM</name>
<gene>
    <name evidence="1" type="primary">def</name>
    <name type="ordered locus">WD_0165</name>
</gene>
<protein>
    <recommendedName>
        <fullName evidence="1">Peptide deformylase</fullName>
        <shortName evidence="1">PDF</shortName>
        <ecNumber evidence="1">3.5.1.88</ecNumber>
    </recommendedName>
    <alternativeName>
        <fullName evidence="1">Polypeptide deformylase</fullName>
    </alternativeName>
</protein>
<keyword id="KW-0378">Hydrolase</keyword>
<keyword id="KW-0408">Iron</keyword>
<keyword id="KW-0479">Metal-binding</keyword>
<keyword id="KW-0648">Protein biosynthesis</keyword>
<feature type="chain" id="PRO_0000301124" description="Peptide deformylase">
    <location>
        <begin position="1"/>
        <end position="179"/>
    </location>
</feature>
<feature type="active site" evidence="1">
    <location>
        <position position="145"/>
    </location>
</feature>
<feature type="binding site" evidence="1">
    <location>
        <position position="102"/>
    </location>
    <ligand>
        <name>Fe cation</name>
        <dbReference type="ChEBI" id="CHEBI:24875"/>
    </ligand>
</feature>
<feature type="binding site" evidence="1">
    <location>
        <position position="144"/>
    </location>
    <ligand>
        <name>Fe cation</name>
        <dbReference type="ChEBI" id="CHEBI:24875"/>
    </ligand>
</feature>
<feature type="binding site" evidence="1">
    <location>
        <position position="148"/>
    </location>
    <ligand>
        <name>Fe cation</name>
        <dbReference type="ChEBI" id="CHEBI:24875"/>
    </ligand>
</feature>
<sequence>MSILPIVIAPDERLITRASEVTDINDKIKELVNDMFETMYDAEGLGLAAVQVGVLKRIFVMDIQLETIENEPAGYGSTGKFYMINPEITELSDEQVILKEGCLSIPEQSHEIKRPKYLTVKYKDLDNEEQTLKASGWLARCIQHELDHLNGILYIRHLSKLKYDMAMKKAQKVKKHYEQ</sequence>